<reference key="1">
    <citation type="journal article" date="2002" name="Mol. Microbiol.">
        <title>Genome sequence of Streptococcus agalactiae, a pathogen causing invasive neonatal disease.</title>
        <authorList>
            <person name="Glaser P."/>
            <person name="Rusniok C."/>
            <person name="Buchrieser C."/>
            <person name="Chevalier F."/>
            <person name="Frangeul L."/>
            <person name="Msadek T."/>
            <person name="Zouine M."/>
            <person name="Couve E."/>
            <person name="Lalioui L."/>
            <person name="Poyart C."/>
            <person name="Trieu-Cuot P."/>
            <person name="Kunst F."/>
        </authorList>
    </citation>
    <scope>NUCLEOTIDE SEQUENCE [LARGE SCALE GENOMIC DNA]</scope>
    <source>
        <strain>NEM316</strain>
    </source>
</reference>
<dbReference type="EMBL" id="AL766848">
    <property type="protein sequence ID" value="CAD46690.1"/>
    <property type="molecule type" value="Genomic_DNA"/>
</dbReference>
<dbReference type="RefSeq" id="WP_000631264.1">
    <property type="nucleotide sequence ID" value="NC_004368.1"/>
</dbReference>
<dbReference type="SMR" id="Q8E5J8"/>
<dbReference type="KEGG" id="san:gbs1031"/>
<dbReference type="eggNOG" id="COG1393">
    <property type="taxonomic scope" value="Bacteria"/>
</dbReference>
<dbReference type="HOGENOM" id="CLU_116644_1_1_9"/>
<dbReference type="Proteomes" id="UP000000823">
    <property type="component" value="Chromosome"/>
</dbReference>
<dbReference type="GO" id="GO:0005737">
    <property type="term" value="C:cytoplasm"/>
    <property type="evidence" value="ECO:0007669"/>
    <property type="project" value="UniProtKB-SubCell"/>
</dbReference>
<dbReference type="GO" id="GO:0045892">
    <property type="term" value="P:negative regulation of DNA-templated transcription"/>
    <property type="evidence" value="ECO:0007669"/>
    <property type="project" value="InterPro"/>
</dbReference>
<dbReference type="CDD" id="cd03032">
    <property type="entry name" value="ArsC_Spx"/>
    <property type="match status" value="1"/>
</dbReference>
<dbReference type="Gene3D" id="3.40.30.10">
    <property type="entry name" value="Glutaredoxin"/>
    <property type="match status" value="1"/>
</dbReference>
<dbReference type="HAMAP" id="MF_01132">
    <property type="entry name" value="Spx"/>
    <property type="match status" value="1"/>
</dbReference>
<dbReference type="InterPro" id="IPR006660">
    <property type="entry name" value="Arsenate_reductase-like"/>
</dbReference>
<dbReference type="InterPro" id="IPR023731">
    <property type="entry name" value="Spx"/>
</dbReference>
<dbReference type="InterPro" id="IPR036249">
    <property type="entry name" value="Thioredoxin-like_sf"/>
</dbReference>
<dbReference type="InterPro" id="IPR006504">
    <property type="entry name" value="Tscrpt_reg_Spx/MgsR"/>
</dbReference>
<dbReference type="NCBIfam" id="TIGR01617">
    <property type="entry name" value="arsC_related"/>
    <property type="match status" value="1"/>
</dbReference>
<dbReference type="NCBIfam" id="NF002459">
    <property type="entry name" value="PRK01655.1"/>
    <property type="match status" value="1"/>
</dbReference>
<dbReference type="PANTHER" id="PTHR30041">
    <property type="entry name" value="ARSENATE REDUCTASE"/>
    <property type="match status" value="1"/>
</dbReference>
<dbReference type="PANTHER" id="PTHR30041:SF7">
    <property type="entry name" value="GLOBAL TRANSCRIPTIONAL REGULATOR SPX"/>
    <property type="match status" value="1"/>
</dbReference>
<dbReference type="Pfam" id="PF03960">
    <property type="entry name" value="ArsC"/>
    <property type="match status" value="1"/>
</dbReference>
<dbReference type="SUPFAM" id="SSF52833">
    <property type="entry name" value="Thioredoxin-like"/>
    <property type="match status" value="1"/>
</dbReference>
<dbReference type="PROSITE" id="PS51353">
    <property type="entry name" value="ARSC"/>
    <property type="match status" value="1"/>
</dbReference>
<feature type="chain" id="PRO_0000162572" description="Global transcriptional regulator Spx">
    <location>
        <begin position="1"/>
        <end position="137"/>
    </location>
</feature>
<feature type="disulfide bond" description="Redox-active" evidence="1">
    <location>
        <begin position="10"/>
        <end position="13"/>
    </location>
</feature>
<proteinExistence type="inferred from homology"/>
<gene>
    <name evidence="1" type="primary">spx</name>
    <name type="ordered locus">gbs1031</name>
</gene>
<comment type="function">
    <text evidence="1">Global transcriptional regulator that plays a key role in stress response and exerts either positive or negative regulation of genes. Acts by interacting with the C-terminal domain of the alpha subunit of the RNA polymerase (RNAP). This interaction can enhance binding of RNAP to the promoter region of target genes and stimulate their transcription, or block interaction of RNAP with activator.</text>
</comment>
<comment type="subunit">
    <text evidence="1">Interacts with the C-terminal domain of the alpha subunit of the RNAP.</text>
</comment>
<comment type="subcellular location">
    <subcellularLocation>
        <location evidence="1">Cytoplasm</location>
    </subcellularLocation>
</comment>
<comment type="similarity">
    <text evidence="1">Belongs to the ArsC family. Spx subfamily.</text>
</comment>
<evidence type="ECO:0000255" key="1">
    <source>
        <dbReference type="HAMAP-Rule" id="MF_01132"/>
    </source>
</evidence>
<name>SPX_STRA3</name>
<organism>
    <name type="scientific">Streptococcus agalactiae serotype III (strain NEM316)</name>
    <dbReference type="NCBI Taxonomy" id="211110"/>
    <lineage>
        <taxon>Bacteria</taxon>
        <taxon>Bacillati</taxon>
        <taxon>Bacillota</taxon>
        <taxon>Bacilli</taxon>
        <taxon>Lactobacillales</taxon>
        <taxon>Streptococcaceae</taxon>
        <taxon>Streptococcus</taxon>
    </lineage>
</organism>
<accession>Q8E5J8</accession>
<sequence>MITLFLSPSCTSCRKARAWLSKHEVAFEEHNIITSPLNKEELLQILSFTENGTEDIISTRSKVFQKLAIDVDELSTSSLMELISENPSLLRRPIILDKKRMQIGFNEDEIRAFLPRDYRKQELKQATIRAEIEGKHD</sequence>
<keyword id="KW-0963">Cytoplasm</keyword>
<keyword id="KW-1015">Disulfide bond</keyword>
<keyword id="KW-0676">Redox-active center</keyword>
<keyword id="KW-0804">Transcription</keyword>
<keyword id="KW-0805">Transcription regulation</keyword>
<protein>
    <recommendedName>
        <fullName evidence="1">Global transcriptional regulator Spx</fullName>
    </recommendedName>
</protein>